<reference key="1">
    <citation type="journal article" date="1994" name="Nature">
        <title>A two-component system that regulates an osmosensing MAP kinase cascade in yeast.</title>
        <authorList>
            <person name="Maeda T."/>
            <person name="Wurgler-Murphy S.M."/>
            <person name="Saito H."/>
        </authorList>
    </citation>
    <scope>NUCLEOTIDE SEQUENCE [GENOMIC DNA]</scope>
    <scope>MUTAGENESIS OF ASP-554</scope>
</reference>
<reference key="2">
    <citation type="journal article" date="1997" name="Nature">
        <title>The nucleotide sequence of Saccharomyces cerevisiae chromosome XII.</title>
        <authorList>
            <person name="Johnston M."/>
            <person name="Hillier L.W."/>
            <person name="Riles L."/>
            <person name="Albermann K."/>
            <person name="Andre B."/>
            <person name="Ansorge W."/>
            <person name="Benes V."/>
            <person name="Brueckner M."/>
            <person name="Delius H."/>
            <person name="Dubois E."/>
            <person name="Duesterhoeft A."/>
            <person name="Entian K.-D."/>
            <person name="Floeth M."/>
            <person name="Goffeau A."/>
            <person name="Hebling U."/>
            <person name="Heumann K."/>
            <person name="Heuss-Neitzel D."/>
            <person name="Hilbert H."/>
            <person name="Hilger F."/>
            <person name="Kleine K."/>
            <person name="Koetter P."/>
            <person name="Louis E.J."/>
            <person name="Messenguy F."/>
            <person name="Mewes H.-W."/>
            <person name="Miosga T."/>
            <person name="Moestl D."/>
            <person name="Mueller-Auer S."/>
            <person name="Nentwich U."/>
            <person name="Obermaier B."/>
            <person name="Piravandi E."/>
            <person name="Pohl T.M."/>
            <person name="Portetelle D."/>
            <person name="Purnelle B."/>
            <person name="Rechmann S."/>
            <person name="Rieger M."/>
            <person name="Rinke M."/>
            <person name="Rose M."/>
            <person name="Scharfe M."/>
            <person name="Scherens B."/>
            <person name="Scholler P."/>
            <person name="Schwager C."/>
            <person name="Schwarz S."/>
            <person name="Underwood A.P."/>
            <person name="Urrestarazu L.A."/>
            <person name="Vandenbol M."/>
            <person name="Verhasselt P."/>
            <person name="Vierendeels F."/>
            <person name="Voet M."/>
            <person name="Volckaert G."/>
            <person name="Voss H."/>
            <person name="Wambutt R."/>
            <person name="Wedler E."/>
            <person name="Wedler H."/>
            <person name="Zimmermann F.K."/>
            <person name="Zollner A."/>
            <person name="Hani J."/>
            <person name="Hoheisel J.D."/>
        </authorList>
    </citation>
    <scope>NUCLEOTIDE SEQUENCE [LARGE SCALE GENOMIC DNA]</scope>
    <source>
        <strain>ATCC 204508 / S288c</strain>
    </source>
</reference>
<reference key="3">
    <citation type="journal article" date="2014" name="G3 (Bethesda)">
        <title>The reference genome sequence of Saccharomyces cerevisiae: Then and now.</title>
        <authorList>
            <person name="Engel S.R."/>
            <person name="Dietrich F.S."/>
            <person name="Fisk D.G."/>
            <person name="Binkley G."/>
            <person name="Balakrishnan R."/>
            <person name="Costanzo M.C."/>
            <person name="Dwight S.S."/>
            <person name="Hitz B.C."/>
            <person name="Karra K."/>
            <person name="Nash R.S."/>
            <person name="Weng S."/>
            <person name="Wong E.D."/>
            <person name="Lloyd P."/>
            <person name="Skrzypek M.S."/>
            <person name="Miyasato S.R."/>
            <person name="Simison M."/>
            <person name="Cherry J.M."/>
        </authorList>
    </citation>
    <scope>GENOME REANNOTATION</scope>
    <source>
        <strain>ATCC 204508 / S288c</strain>
    </source>
</reference>
<reference key="4">
    <citation type="journal article" date="1996" name="Cell">
        <title>Yeast HOG1 MAP kinase cascade is regulated by a multistep phosphorelay mechanism in the SLN1-YPD1-SSK1 two-component osmosensor.</title>
        <authorList>
            <person name="Posas F."/>
            <person name="Wurgler-Murphy S.M."/>
            <person name="Maeda T."/>
            <person name="Witten E.A."/>
            <person name="Thai T.C."/>
            <person name="Saito H."/>
        </authorList>
    </citation>
    <scope>FUNCTION</scope>
    <scope>PHOSPHORYLATION AT ASP-554</scope>
    <scope>INTERACTION WITH YPD1</scope>
</reference>
<reference key="5">
    <citation type="journal article" date="2000" name="J. Bacteriol.">
        <title>Novel role for an HPt domain in stabilizing the phosphorylated state of a response regulator domain.</title>
        <authorList>
            <person name="Janiak-Spens F."/>
            <person name="Sparling D.P."/>
            <person name="West A.H."/>
        </authorList>
    </citation>
    <scope>FUNCTION</scope>
</reference>
<reference key="6">
    <citation type="journal article" date="2003" name="Mol. Cell. Biol.">
        <title>Phosphorelay-regulated degradation of the yeast Ssk1p response regulator by the ubiquitin-proteasome system.</title>
        <authorList>
            <person name="Sato N."/>
            <person name="Kawahara H."/>
            <person name="Toh-e A."/>
            <person name="Maeda T."/>
        </authorList>
    </citation>
    <scope>FUNCTION</scope>
    <scope>DEGRADATION</scope>
</reference>
<reference key="7">
    <citation type="journal article" date="2003" name="Eukaryot. Cell">
        <title>Saccharomyces cerevisiae histidine phosphotransferase Ypd1p shuttles between the nucleus and cytoplasm for SLN1-dependent phosphorylation of Ssk1p and Skn7p.</title>
        <authorList>
            <person name="Lu J.M.-Y."/>
            <person name="Deschenes R.J."/>
            <person name="Fassler J.S."/>
        </authorList>
    </citation>
    <scope>SUBCELLULAR LOCATION</scope>
</reference>
<reference key="8">
    <citation type="journal article" date="2003" name="Nature">
        <title>Global analysis of protein expression in yeast.</title>
        <authorList>
            <person name="Ghaemmaghami S."/>
            <person name="Huh W.-K."/>
            <person name="Bower K."/>
            <person name="Howson R.W."/>
            <person name="Belle A."/>
            <person name="Dephoure N."/>
            <person name="O'Shea E.K."/>
            <person name="Weissman J.S."/>
        </authorList>
    </citation>
    <scope>LEVEL OF PROTEIN EXPRESSION [LARGE SCALE ANALYSIS]</scope>
</reference>
<reference key="9">
    <citation type="journal article" date="2005" name="Mol. Cell. Proteomics">
        <title>Quantitative phosphoproteomics applied to the yeast pheromone signaling pathway.</title>
        <authorList>
            <person name="Gruhler A."/>
            <person name="Olsen J.V."/>
            <person name="Mohammed S."/>
            <person name="Mortensen P."/>
            <person name="Faergeman N.J."/>
            <person name="Mann M."/>
            <person name="Jensen O.N."/>
        </authorList>
    </citation>
    <scope>PHOSPHORYLATION [LARGE SCALE ANALYSIS] AT SER-110</scope>
    <scope>IDENTIFICATION BY MASS SPECTROMETRY [LARGE SCALE ANALYSIS]</scope>
    <source>
        <strain>YAL6B</strain>
    </source>
</reference>
<reference key="10">
    <citation type="journal article" date="2006" name="Eukaryot. Cell">
        <title>Mitogen-activated protein kinase Hog1 is essential for the response to arsenite in Saccharomyces cerevisiae.</title>
        <authorList>
            <person name="Sotelo J."/>
            <person name="Rodriguez-Gabriel M.A."/>
        </authorList>
    </citation>
    <scope>DISRUPTION PHENOTYPE</scope>
</reference>
<reference key="11">
    <citation type="journal article" date="2007" name="J. Proteome Res.">
        <title>Large-scale phosphorylation analysis of alpha-factor-arrested Saccharomyces cerevisiae.</title>
        <authorList>
            <person name="Li X."/>
            <person name="Gerber S.A."/>
            <person name="Rudner A.D."/>
            <person name="Beausoleil S.A."/>
            <person name="Haas W."/>
            <person name="Villen J."/>
            <person name="Elias J.E."/>
            <person name="Gygi S.P."/>
        </authorList>
    </citation>
    <scope>PHOSPHORYLATION [LARGE SCALE ANALYSIS] AT SER-380 AND SER-673</scope>
    <scope>IDENTIFICATION BY MASS SPECTROMETRY [LARGE SCALE ANALYSIS]</scope>
    <source>
        <strain>ADR376</strain>
    </source>
</reference>
<reference key="12">
    <citation type="journal article" date="2007" name="Proc. Natl. Acad. Sci. U.S.A.">
        <title>Analysis of phosphorylation sites on proteins from Saccharomyces cerevisiae by electron transfer dissociation (ETD) mass spectrometry.</title>
        <authorList>
            <person name="Chi A."/>
            <person name="Huttenhower C."/>
            <person name="Geer L.Y."/>
            <person name="Coon J.J."/>
            <person name="Syka J.E.P."/>
            <person name="Bai D.L."/>
            <person name="Shabanowitz J."/>
            <person name="Burke D.J."/>
            <person name="Troyanskaya O.G."/>
            <person name="Hunt D.F."/>
        </authorList>
    </citation>
    <scope>PHOSPHORYLATION [LARGE SCALE ANALYSIS] AT SER-368; SER-673 AND THR-693</scope>
    <scope>IDENTIFICATION BY MASS SPECTROMETRY [LARGE SCALE ANALYSIS]</scope>
</reference>
<reference key="13">
    <citation type="journal article" date="2008" name="Mol. Cell. Proteomics">
        <title>A multidimensional chromatography technology for in-depth phosphoproteome analysis.</title>
        <authorList>
            <person name="Albuquerque C.P."/>
            <person name="Smolka M.B."/>
            <person name="Payne S.H."/>
            <person name="Bafna V."/>
            <person name="Eng J."/>
            <person name="Zhou H."/>
        </authorList>
    </citation>
    <scope>PHOSPHORYLATION [LARGE SCALE ANALYSIS] AT SER-195; SER-327 AND SER-703</scope>
    <scope>IDENTIFICATION BY MASS SPECTROMETRY [LARGE SCALE ANALYSIS]</scope>
</reference>
<reference key="14">
    <citation type="journal article" date="2009" name="Science">
        <title>Global analysis of Cdk1 substrate phosphorylation sites provides insights into evolution.</title>
        <authorList>
            <person name="Holt L.J."/>
            <person name="Tuch B.B."/>
            <person name="Villen J."/>
            <person name="Johnson A.D."/>
            <person name="Gygi S.P."/>
            <person name="Morgan D.O."/>
        </authorList>
    </citation>
    <scope>PHOSPHORYLATION [LARGE SCALE ANALYSIS] AT SER-351; SER-380; SER-703 AND SER-706</scope>
    <scope>IDENTIFICATION BY MASS SPECTROMETRY [LARGE SCALE ANALYSIS]</scope>
</reference>
<reference key="15">
    <citation type="journal article" date="2019" name="Protein Sci.">
        <title>Insights revealed by the co-crystal structure of the Saccharomyces cerevisiae histidine phosphotransfer protein Ypd1 and the receiver domain of its downstream response regulator Ssk1.</title>
        <authorList>
            <person name="Branscum K.M."/>
            <person name="Menon S.K."/>
            <person name="Foster C.A."/>
            <person name="West A.H."/>
        </authorList>
    </citation>
    <scope>X-RAY CRYSTALLOGRAPHY (2.8 ANGSTROMS) OF 405-712 IN COMPLEX WITH YPD1</scope>
    <scope>SUBUNIT</scope>
    <scope>DOMAIN</scope>
    <scope>MUTAGENESIS OF ARG-524; LYS-525 AND TRP-638</scope>
</reference>
<keyword id="KW-0002">3D-structure</keyword>
<keyword id="KW-0963">Cytoplasm</keyword>
<keyword id="KW-0597">Phosphoprotein</keyword>
<keyword id="KW-1185">Reference proteome</keyword>
<keyword id="KW-0902">Two-component regulatory system</keyword>
<feature type="chain" id="PRO_0000081406" description="Osmolarity two-component system protein SSK1">
    <location>
        <begin position="1"/>
        <end position="712"/>
    </location>
</feature>
<feature type="domain" description="Response regulatory" evidence="1 8">
    <location>
        <begin position="505"/>
        <end position="647"/>
    </location>
</feature>
<feature type="region of interest" description="Disordered" evidence="2">
    <location>
        <begin position="73"/>
        <end position="114"/>
    </location>
</feature>
<feature type="region of interest" description="Disordered" evidence="2">
    <location>
        <begin position="340"/>
        <end position="362"/>
    </location>
</feature>
<feature type="region of interest" description="Disordered" evidence="2">
    <location>
        <begin position="448"/>
        <end position="468"/>
    </location>
</feature>
<feature type="region of interest" description="Disordered" evidence="2">
    <location>
        <begin position="672"/>
        <end position="712"/>
    </location>
</feature>
<feature type="compositionally biased region" description="Low complexity" evidence="2">
    <location>
        <begin position="74"/>
        <end position="85"/>
    </location>
</feature>
<feature type="compositionally biased region" description="Polar residues" evidence="2">
    <location>
        <begin position="87"/>
        <end position="113"/>
    </location>
</feature>
<feature type="compositionally biased region" description="Polar residues" evidence="2">
    <location>
        <begin position="682"/>
        <end position="712"/>
    </location>
</feature>
<feature type="modified residue" description="Phosphoserine" evidence="13">
    <location>
        <position position="110"/>
    </location>
</feature>
<feature type="modified residue" description="Phosphoserine" evidence="16">
    <location>
        <position position="195"/>
    </location>
</feature>
<feature type="modified residue" description="Phosphoserine" evidence="16">
    <location>
        <position position="327"/>
    </location>
</feature>
<feature type="modified residue" description="Phosphoserine" evidence="17">
    <location>
        <position position="351"/>
    </location>
</feature>
<feature type="modified residue" description="Phosphoserine" evidence="14">
    <location>
        <position position="368"/>
    </location>
</feature>
<feature type="modified residue" description="Phosphoserine" evidence="15 17">
    <location>
        <position position="380"/>
    </location>
</feature>
<feature type="modified residue" description="4-aspartylphosphate" evidence="1 10">
    <location>
        <position position="554"/>
    </location>
</feature>
<feature type="modified residue" description="Phosphoserine" evidence="14 15">
    <location>
        <position position="673"/>
    </location>
</feature>
<feature type="modified residue" description="Phosphothreonine" evidence="14">
    <location>
        <position position="693"/>
    </location>
</feature>
<feature type="modified residue" description="Phosphoserine" evidence="16 17">
    <location>
        <position position="703"/>
    </location>
</feature>
<feature type="modified residue" description="Phosphoserine" evidence="17">
    <location>
        <position position="706"/>
    </location>
</feature>
<feature type="mutagenesis site" description="Greatly diminished the binding affinity to YPD1." evidence="8">
    <original>R</original>
    <variation>A</variation>
    <location>
        <position position="524"/>
    </location>
</feature>
<feature type="mutagenesis site" description="Greatly diminished the binding affinity to YPD1." evidence="8">
    <original>K</original>
    <variation>A</variation>
    <location>
        <position position="525"/>
    </location>
</feature>
<feature type="mutagenesis site" description="Activates." evidence="9">
    <original>D</original>
    <variation>N</variation>
    <location>
        <position position="554"/>
    </location>
</feature>
<feature type="mutagenesis site" description="Leads to improved solubility and notable purification improvements, shows a moderate difference in binding affinity for YPD1, but does not affect levels of phosphoaccepting ability nor phosphorylated half-life." evidence="8">
    <original>W</original>
    <variation>A</variation>
    <location>
        <position position="638"/>
    </location>
</feature>
<feature type="sequence conflict" description="In Ref. 1; AAA35100." evidence="12" ref="1">
    <original>P</original>
    <variation>S</variation>
    <location>
        <position position="181"/>
    </location>
</feature>
<feature type="strand" evidence="18">
    <location>
        <begin position="506"/>
        <end position="509"/>
    </location>
</feature>
<feature type="helix" evidence="18">
    <location>
        <begin position="513"/>
        <end position="525"/>
    </location>
</feature>
<feature type="strand" evidence="18">
    <location>
        <begin position="530"/>
        <end position="535"/>
    </location>
</feature>
<feature type="helix" evidence="18">
    <location>
        <begin position="536"/>
        <end position="544"/>
    </location>
</feature>
<feature type="strand" evidence="18">
    <location>
        <begin position="550"/>
        <end position="555"/>
    </location>
</feature>
<feature type="strand" evidence="18">
    <location>
        <begin position="558"/>
        <end position="560"/>
    </location>
</feature>
<feature type="helix" evidence="18">
    <location>
        <begin position="562"/>
        <end position="575"/>
    </location>
</feature>
<feature type="strand" evidence="18">
    <location>
        <begin position="605"/>
        <end position="613"/>
    </location>
</feature>
<feature type="helix" evidence="18">
    <location>
        <begin position="615"/>
        <end position="622"/>
    </location>
</feature>
<feature type="turn" evidence="18">
    <location>
        <begin position="623"/>
        <end position="625"/>
    </location>
</feature>
<feature type="strand" evidence="18">
    <location>
        <begin position="627"/>
        <end position="633"/>
    </location>
</feature>
<feature type="helix" evidence="18">
    <location>
        <begin position="636"/>
        <end position="651"/>
    </location>
</feature>
<comment type="function">
    <text evidence="3 4 10">Final receptor of the SLN1-YPD1-SSK1 two-component regulatory system, which controls activity of the HOG1 pathway in response to changes in the osmolarity of the extracellular environment. Under normal osmotic conditions, maintained in a phosphorylated and inactive state by the phosphorelay intermediate protein YPD1. Under conditions of high osmolarity, the histidine kinase SLN1 is no longer active and the unphosphorylated form of SSK1 interacts with and activates SSK2 and SSK22, two MAPKKKs that further stimulate the PBS2-HOG1 MAPKK-MAPK cascade. Unphosphorylated SSK1 is subsequently degraded by the UBC7-dependent ubiquitin-proteasome system to down-regulate the HOG1 pathway after completion of the osmotic adaptation.</text>
</comment>
<comment type="subunit">
    <text evidence="8 10">Interacts with SSK2, SSK22 and YPD1.</text>
</comment>
<comment type="interaction">
    <interactant intactId="EBI-18184">
        <id>Q07084</id>
    </interactant>
    <interactant intactId="EBI-18191">
        <id>P53599</id>
        <label>SSK2</label>
    </interactant>
    <organismsDiffer>false</organismsDiffer>
    <experiments>8</experiments>
</comment>
<comment type="interaction">
    <interactant intactId="EBI-18184">
        <id>Q07084</id>
    </interactant>
    <interactant intactId="EBI-18129">
        <id>P25390</id>
        <label>SSK22</label>
    </interactant>
    <organismsDiffer>false</organismsDiffer>
    <experiments>5</experiments>
</comment>
<comment type="interaction">
    <interactant intactId="EBI-18184">
        <id>Q07084</id>
    </interactant>
    <interactant intactId="EBI-34423">
        <id>Q07688</id>
        <label>YPD1</label>
    </interactant>
    <organismsDiffer>false</organismsDiffer>
    <experiments>3</experiments>
</comment>
<comment type="subcellular location">
    <subcellularLocation>
        <location evidence="6">Cytoplasm</location>
    </subcellularLocation>
</comment>
<comment type="PTM">
    <text>The phosphorelay mechanism involves the sequential transfer of a phosphate group from 'His-576' (H1) to 'Asp-1144' (D1) of SLN1, then to 'His-64' (H2) of YPD1 and finally to Asp-554 (D2) of SSK1.</text>
</comment>
<comment type="disruption phenotype">
    <text evidence="7">Increases arsenite sensitivity.</text>
</comment>
<comment type="miscellaneous">
    <text evidence="5">Present with 1200 molecules/cell in log phase SD medium.</text>
</comment>
<comment type="similarity">
    <text evidence="12">Belongs to the SSK1 family.</text>
</comment>
<sequence length="712" mass="78529">MLNSALLWKVWLRIDNSTDEVNQPIAVQFDEIDTVDDLKSRFFQKLSSTRWREINDNASIAIGLYAPKFDNQADNTSSNNTNDNSCRSKSNGAGSGANLSVNSNTKSSVSPTAGSFGLSKDLAKDRNVLQHPKPTQKRGALYDAFAAVPTVAATTNVDFPPNEAPMLSPQRPYSTSPKQFPATTKSPLLRFASVSPYPKFHSDNQIMASAGLTYVSPHNKNKYTRPLIRKGLNFTTESVNDCTYKIIFEPDELAINIYKELFGTMGSQPASQPLLIFSNVNLRQDVPPLDILNVVDYVPTNEEISQQKTQPTDHGAVGVFHLDDHISPGEQGLKQTIGDKADLKGKDGNSSPQEFKLITDEEQLRRASQELKDEEKDAESPWQAILLLPKGYKGGVDFRNKPVAHTDSSFNNEDTITHSELEVNTGSPSQESGSLNEAGIGITQPMSEVQRRKEDVTPASPILTSSQTPHYSNSLYNAPFAVSSPPDPLPNLFTTTSEKVFPKINVLIVEDNVINQAILGSFLRKHKISYKLAKNGQEAVNIWKEGGLHLIFMDLQLPVLSGIEAAKQIRDFEKQNGIGIQKSLNNSHSNLEKGTSKRFSQAPVIIVALTASNSQMDKRKALLSGCNDYLTKPVNLHWLSKKITEWGCMQALIDFDSWKQGESRMTDSVLVKSPQKPIAPSNPHSFKQATSMTPTHSPVRKNSNLSPTQIEL</sequence>
<protein>
    <recommendedName>
        <fullName evidence="11">Osmolarity two-component system protein SSK1</fullName>
    </recommendedName>
</protein>
<accession>Q07084</accession>
<accession>D6VY08</accession>
<accession>Q07909</accession>
<gene>
    <name evidence="11" type="primary">SSK1</name>
    <name type="ordered locus">YLR006C</name>
</gene>
<evidence type="ECO:0000255" key="1">
    <source>
        <dbReference type="PROSITE-ProRule" id="PRU00169"/>
    </source>
</evidence>
<evidence type="ECO:0000256" key="2">
    <source>
        <dbReference type="SAM" id="MobiDB-lite"/>
    </source>
</evidence>
<evidence type="ECO:0000269" key="3">
    <source>
    </source>
</evidence>
<evidence type="ECO:0000269" key="4">
    <source>
    </source>
</evidence>
<evidence type="ECO:0000269" key="5">
    <source>
    </source>
</evidence>
<evidence type="ECO:0000269" key="6">
    <source>
    </source>
</evidence>
<evidence type="ECO:0000269" key="7">
    <source>
    </source>
</evidence>
<evidence type="ECO:0000269" key="8">
    <source>
    </source>
</evidence>
<evidence type="ECO:0000269" key="9">
    <source>
    </source>
</evidence>
<evidence type="ECO:0000269" key="10">
    <source>
    </source>
</evidence>
<evidence type="ECO:0000303" key="11">
    <source>
    </source>
</evidence>
<evidence type="ECO:0000305" key="12"/>
<evidence type="ECO:0007744" key="13">
    <source>
    </source>
</evidence>
<evidence type="ECO:0007744" key="14">
    <source>
    </source>
</evidence>
<evidence type="ECO:0007744" key="15">
    <source>
    </source>
</evidence>
<evidence type="ECO:0007744" key="16">
    <source>
    </source>
</evidence>
<evidence type="ECO:0007744" key="17">
    <source>
    </source>
</evidence>
<evidence type="ECO:0007829" key="18">
    <source>
        <dbReference type="PDB" id="5KBX"/>
    </source>
</evidence>
<organism>
    <name type="scientific">Saccharomyces cerevisiae (strain ATCC 204508 / S288c)</name>
    <name type="common">Baker's yeast</name>
    <dbReference type="NCBI Taxonomy" id="559292"/>
    <lineage>
        <taxon>Eukaryota</taxon>
        <taxon>Fungi</taxon>
        <taxon>Dikarya</taxon>
        <taxon>Ascomycota</taxon>
        <taxon>Saccharomycotina</taxon>
        <taxon>Saccharomycetes</taxon>
        <taxon>Saccharomycetales</taxon>
        <taxon>Saccharomycetaceae</taxon>
        <taxon>Saccharomyces</taxon>
    </lineage>
</organism>
<proteinExistence type="evidence at protein level"/>
<dbReference type="EMBL" id="L26523">
    <property type="protein sequence ID" value="AAA35100.1"/>
    <property type="molecule type" value="Genomic_DNA"/>
</dbReference>
<dbReference type="EMBL" id="Z73178">
    <property type="protein sequence ID" value="CAA97528.1"/>
    <property type="molecule type" value="Genomic_DNA"/>
</dbReference>
<dbReference type="EMBL" id="BK006945">
    <property type="protein sequence ID" value="DAA09324.1"/>
    <property type="molecule type" value="Genomic_DNA"/>
</dbReference>
<dbReference type="PIR" id="S64828">
    <property type="entry name" value="S64828"/>
</dbReference>
<dbReference type="RefSeq" id="NP_013106.1">
    <property type="nucleotide sequence ID" value="NM_001181893.1"/>
</dbReference>
<dbReference type="PDB" id="5KBX">
    <property type="method" value="X-ray"/>
    <property type="resolution" value="2.80 A"/>
    <property type="chains" value="B=495-712"/>
</dbReference>
<dbReference type="PDBsum" id="5KBX"/>
<dbReference type="SMR" id="Q07084"/>
<dbReference type="BioGRID" id="31279">
    <property type="interactions" value="146"/>
</dbReference>
<dbReference type="DIP" id="DIP-2437N"/>
<dbReference type="FunCoup" id="Q07084">
    <property type="interactions" value="260"/>
</dbReference>
<dbReference type="IntAct" id="Q07084">
    <property type="interactions" value="43"/>
</dbReference>
<dbReference type="MINT" id="Q07084"/>
<dbReference type="STRING" id="4932.YLR006C"/>
<dbReference type="GlyGen" id="Q07084">
    <property type="glycosylation" value="1 site"/>
</dbReference>
<dbReference type="iPTMnet" id="Q07084"/>
<dbReference type="PaxDb" id="4932-YLR006C"/>
<dbReference type="PeptideAtlas" id="Q07084"/>
<dbReference type="EnsemblFungi" id="YLR006C_mRNA">
    <property type="protein sequence ID" value="YLR006C"/>
    <property type="gene ID" value="YLR006C"/>
</dbReference>
<dbReference type="GeneID" id="850692"/>
<dbReference type="KEGG" id="sce:YLR006C"/>
<dbReference type="AGR" id="SGD:S000003996"/>
<dbReference type="SGD" id="S000003996">
    <property type="gene designation" value="SSK1"/>
</dbReference>
<dbReference type="VEuPathDB" id="FungiDB:YLR006C"/>
<dbReference type="eggNOG" id="KOG0519">
    <property type="taxonomic scope" value="Eukaryota"/>
</dbReference>
<dbReference type="HOGENOM" id="CLU_008307_3_0_1"/>
<dbReference type="InParanoid" id="Q07084"/>
<dbReference type="OMA" id="WREINDN"/>
<dbReference type="OrthoDB" id="21225at2759"/>
<dbReference type="BioCyc" id="YEAST:G3O-32167-MONOMER"/>
<dbReference type="BioGRID-ORCS" id="850692">
    <property type="hits" value="0 hits in 10 CRISPR screens"/>
</dbReference>
<dbReference type="PRO" id="PR:Q07084"/>
<dbReference type="Proteomes" id="UP000002311">
    <property type="component" value="Chromosome XII"/>
</dbReference>
<dbReference type="RNAct" id="Q07084">
    <property type="molecule type" value="protein"/>
</dbReference>
<dbReference type="GO" id="GO:0005737">
    <property type="term" value="C:cytoplasm"/>
    <property type="evidence" value="ECO:0000314"/>
    <property type="project" value="SGD"/>
</dbReference>
<dbReference type="GO" id="GO:0031435">
    <property type="term" value="F:mitogen-activated protein kinase kinase kinase binding"/>
    <property type="evidence" value="ECO:0000353"/>
    <property type="project" value="SGD"/>
</dbReference>
<dbReference type="GO" id="GO:0000156">
    <property type="term" value="F:phosphorelay response regulator activity"/>
    <property type="evidence" value="ECO:0000315"/>
    <property type="project" value="SGD"/>
</dbReference>
<dbReference type="GO" id="GO:0030295">
    <property type="term" value="F:protein kinase activator activity"/>
    <property type="evidence" value="ECO:0000314"/>
    <property type="project" value="SGD"/>
</dbReference>
<dbReference type="GO" id="GO:0071474">
    <property type="term" value="P:cellular hyperosmotic response"/>
    <property type="evidence" value="ECO:0000314"/>
    <property type="project" value="SGD"/>
</dbReference>
<dbReference type="GO" id="GO:0071468">
    <property type="term" value="P:cellular response to acidic pH"/>
    <property type="evidence" value="ECO:0000315"/>
    <property type="project" value="SGD"/>
</dbReference>
<dbReference type="GO" id="GO:0007234">
    <property type="term" value="P:osmosensory signaling via phosphorelay pathway"/>
    <property type="evidence" value="ECO:0000314"/>
    <property type="project" value="SGD"/>
</dbReference>
<dbReference type="GO" id="GO:0032956">
    <property type="term" value="P:regulation of actin cytoskeleton organization"/>
    <property type="evidence" value="ECO:0000315"/>
    <property type="project" value="SGD"/>
</dbReference>
<dbReference type="GO" id="GO:1900744">
    <property type="term" value="P:regulation of p38MAPK cascade"/>
    <property type="evidence" value="ECO:0000314"/>
    <property type="project" value="SGD"/>
</dbReference>
<dbReference type="CDD" id="cd17546">
    <property type="entry name" value="REC_hyHK_CKI1_RcsC-like"/>
    <property type="match status" value="1"/>
</dbReference>
<dbReference type="FunFam" id="3.40.50.2300:FF:000146">
    <property type="entry name" value="Putative two-component response regulator SSK1p"/>
    <property type="match status" value="1"/>
</dbReference>
<dbReference type="Gene3D" id="3.40.50.2300">
    <property type="match status" value="1"/>
</dbReference>
<dbReference type="InterPro" id="IPR011006">
    <property type="entry name" value="CheY-like_superfamily"/>
</dbReference>
<dbReference type="InterPro" id="IPR001789">
    <property type="entry name" value="Sig_transdc_resp-reg_receiver"/>
</dbReference>
<dbReference type="PANTHER" id="PTHR45339">
    <property type="entry name" value="HYBRID SIGNAL TRANSDUCTION HISTIDINE KINASE J"/>
    <property type="match status" value="1"/>
</dbReference>
<dbReference type="PANTHER" id="PTHR45339:SF1">
    <property type="entry name" value="HYBRID SIGNAL TRANSDUCTION HISTIDINE KINASE J"/>
    <property type="match status" value="1"/>
</dbReference>
<dbReference type="Pfam" id="PF00072">
    <property type="entry name" value="Response_reg"/>
    <property type="match status" value="1"/>
</dbReference>
<dbReference type="SMART" id="SM00448">
    <property type="entry name" value="REC"/>
    <property type="match status" value="1"/>
</dbReference>
<dbReference type="SUPFAM" id="SSF52172">
    <property type="entry name" value="CheY-like"/>
    <property type="match status" value="1"/>
</dbReference>
<dbReference type="PROSITE" id="PS50110">
    <property type="entry name" value="RESPONSE_REGULATORY"/>
    <property type="match status" value="1"/>
</dbReference>
<name>SSK1_YEAST</name>